<feature type="chain" id="PRO_0000271204" description="Transmembrane protein 45B">
    <location>
        <begin position="1"/>
        <end position="280"/>
    </location>
</feature>
<feature type="transmembrane region" description="Helical" evidence="1">
    <location>
        <begin position="7"/>
        <end position="27"/>
    </location>
</feature>
<feature type="transmembrane region" description="Helical" evidence="1">
    <location>
        <begin position="49"/>
        <end position="69"/>
    </location>
</feature>
<feature type="transmembrane region" description="Helical" evidence="1">
    <location>
        <begin position="96"/>
        <end position="116"/>
    </location>
</feature>
<feature type="transmembrane region" description="Helical" evidence="1">
    <location>
        <begin position="120"/>
        <end position="140"/>
    </location>
</feature>
<feature type="transmembrane region" description="Helical" evidence="1">
    <location>
        <begin position="150"/>
        <end position="170"/>
    </location>
</feature>
<feature type="transmembrane region" description="Helical" evidence="1">
    <location>
        <begin position="184"/>
        <end position="204"/>
    </location>
</feature>
<feature type="transmembrane region" description="Helical" evidence="1">
    <location>
        <begin position="216"/>
        <end position="236"/>
    </location>
</feature>
<name>TM45B_XENTR</name>
<keyword id="KW-0472">Membrane</keyword>
<keyword id="KW-1185">Reference proteome</keyword>
<keyword id="KW-0812">Transmembrane</keyword>
<keyword id="KW-1133">Transmembrane helix</keyword>
<dbReference type="EMBL" id="CR760159">
    <property type="protein sequence ID" value="CAJ83023.1"/>
    <property type="molecule type" value="mRNA"/>
</dbReference>
<dbReference type="EMBL" id="BC084505">
    <property type="protein sequence ID" value="AAH84505.1"/>
    <property type="molecule type" value="mRNA"/>
</dbReference>
<dbReference type="RefSeq" id="NP_001011108.1">
    <property type="nucleotide sequence ID" value="NM_001011108.1"/>
</dbReference>
<dbReference type="RefSeq" id="XP_017950852.1">
    <property type="nucleotide sequence ID" value="XM_018095363.2"/>
</dbReference>
<dbReference type="SMR" id="Q5XGD7"/>
<dbReference type="FunCoup" id="Q5XGD7">
    <property type="interactions" value="32"/>
</dbReference>
<dbReference type="PaxDb" id="8364-ENSXETP00000008822"/>
<dbReference type="DNASU" id="496521"/>
<dbReference type="GeneID" id="496521"/>
<dbReference type="KEGG" id="xtr:496521"/>
<dbReference type="AGR" id="Xenbase:XB-GENE-5730663"/>
<dbReference type="CTD" id="120224"/>
<dbReference type="Xenbase" id="XB-GENE-5730663">
    <property type="gene designation" value="tmem45b"/>
</dbReference>
<dbReference type="eggNOG" id="ENOG502QU0J">
    <property type="taxonomic scope" value="Eukaryota"/>
</dbReference>
<dbReference type="InParanoid" id="Q5XGD7"/>
<dbReference type="OMA" id="APEWDQK"/>
<dbReference type="OrthoDB" id="551896at2759"/>
<dbReference type="Proteomes" id="UP000008143">
    <property type="component" value="Chromosome 7"/>
</dbReference>
<dbReference type="Bgee" id="ENSXETG00000004079">
    <property type="expression patterns" value="Expressed in ovary and 9 other cell types or tissues"/>
</dbReference>
<dbReference type="ExpressionAtlas" id="Q5XGD7">
    <property type="expression patterns" value="baseline"/>
</dbReference>
<dbReference type="GO" id="GO:0016020">
    <property type="term" value="C:membrane"/>
    <property type="evidence" value="ECO:0007669"/>
    <property type="project" value="UniProtKB-SubCell"/>
</dbReference>
<dbReference type="InterPro" id="IPR006904">
    <property type="entry name" value="DUF716"/>
</dbReference>
<dbReference type="InterPro" id="IPR042127">
    <property type="entry name" value="TMEM45"/>
</dbReference>
<dbReference type="PANTHER" id="PTHR16007">
    <property type="entry name" value="EPIDIDYMAL MEMBRANE PROTEIN E9-RELATED"/>
    <property type="match status" value="1"/>
</dbReference>
<dbReference type="PANTHER" id="PTHR16007:SF59">
    <property type="entry name" value="TRANSMEMBRANE PROTEIN 45B"/>
    <property type="match status" value="1"/>
</dbReference>
<dbReference type="Pfam" id="PF04819">
    <property type="entry name" value="DUF716"/>
    <property type="match status" value="1"/>
</dbReference>
<sequence length="280" mass="31799">MANFKGHALPGSFFLVFGLWWSVKYPLKYLNSKVKGNCRSNKCYERLELIEGILKAAFALIGILAEQFVPDGPHMHLVNGEDHSWVKLMNWQHTTMYLFYGISGVVDILTFLPLNLPRGLDRLSLGIAVIIEGLLFYYHVHNRPALDQHIHSLLLIAVFGGAISIMIEVFMRNDIVLELFRSSLTILQGTWFWQIGFVLYPLGGAPEWDQTDHGNVMFITMCFCWHYAVALLIMAINYSLVYCCVKRHKKLSSVVDNSLKKINSNKTEVEASLLAGSDEE</sequence>
<gene>
    <name type="primary">tmem45b</name>
    <name type="ORF">TNeu104l01.1</name>
</gene>
<organism>
    <name type="scientific">Xenopus tropicalis</name>
    <name type="common">Western clawed frog</name>
    <name type="synonym">Silurana tropicalis</name>
    <dbReference type="NCBI Taxonomy" id="8364"/>
    <lineage>
        <taxon>Eukaryota</taxon>
        <taxon>Metazoa</taxon>
        <taxon>Chordata</taxon>
        <taxon>Craniata</taxon>
        <taxon>Vertebrata</taxon>
        <taxon>Euteleostomi</taxon>
        <taxon>Amphibia</taxon>
        <taxon>Batrachia</taxon>
        <taxon>Anura</taxon>
        <taxon>Pipoidea</taxon>
        <taxon>Pipidae</taxon>
        <taxon>Xenopodinae</taxon>
        <taxon>Xenopus</taxon>
        <taxon>Silurana</taxon>
    </lineage>
</organism>
<reference key="1">
    <citation type="submission" date="2006-10" db="EMBL/GenBank/DDBJ databases">
        <authorList>
            <consortium name="Sanger Xenopus tropicalis EST/cDNA project"/>
        </authorList>
    </citation>
    <scope>NUCLEOTIDE SEQUENCE [LARGE SCALE MRNA]</scope>
    <source>
        <tissue>Neurula</tissue>
    </source>
</reference>
<reference key="2">
    <citation type="submission" date="2004-10" db="EMBL/GenBank/DDBJ databases">
        <authorList>
            <consortium name="NIH - Xenopus Gene Collection (XGC) project"/>
        </authorList>
    </citation>
    <scope>NUCLEOTIDE SEQUENCE [LARGE SCALE MRNA]</scope>
    <source>
        <tissue>Embryo</tissue>
    </source>
</reference>
<comment type="subcellular location">
    <subcellularLocation>
        <location evidence="2">Membrane</location>
        <topology evidence="2">Multi-pass membrane protein</topology>
    </subcellularLocation>
</comment>
<comment type="similarity">
    <text evidence="2">Belongs to the TMEM45 family.</text>
</comment>
<accession>Q5XGD7</accession>
<evidence type="ECO:0000255" key="1"/>
<evidence type="ECO:0000305" key="2"/>
<proteinExistence type="evidence at transcript level"/>
<protein>
    <recommendedName>
        <fullName>Transmembrane protein 45B</fullName>
    </recommendedName>
</protein>